<comment type="function">
    <text>Granulocyte/macrophage colony-stimulating factors are cytokines that act in hematopoiesis by controlling the production, differentiation, and function of 2 related white cell populations of the blood, the granulocytes and the monocytes-macrophages.</text>
</comment>
<comment type="function">
    <text>This CSF induces granulocytes, macrophages, mast cells, stem cells, erythroid cells, eosinophils and megakaryocytes.</text>
</comment>
<comment type="subunit">
    <text>Monomer.</text>
</comment>
<comment type="subcellular location">
    <subcellularLocation>
        <location>Secreted</location>
    </subcellularLocation>
</comment>
<comment type="tissue specificity">
    <text>Activated T-cells, mast cells, natural killer cells.</text>
</comment>
<comment type="similarity">
    <text evidence="3">Belongs to the IL-3 family.</text>
</comment>
<name>IL3_HYLLA</name>
<dbReference type="EMBL" id="M14744">
    <property type="protein sequence ID" value="AAA35455.1"/>
    <property type="molecule type" value="mRNA"/>
</dbReference>
<dbReference type="SMR" id="P06740"/>
<dbReference type="GlyCosmos" id="P06740">
    <property type="glycosylation" value="2 sites, No reported glycans"/>
</dbReference>
<dbReference type="GO" id="GO:0005615">
    <property type="term" value="C:extracellular space"/>
    <property type="evidence" value="ECO:0007669"/>
    <property type="project" value="UniProtKB-KW"/>
</dbReference>
<dbReference type="GO" id="GO:0005125">
    <property type="term" value="F:cytokine activity"/>
    <property type="evidence" value="ECO:0007669"/>
    <property type="project" value="UniProtKB-KW"/>
</dbReference>
<dbReference type="GO" id="GO:0008083">
    <property type="term" value="F:growth factor activity"/>
    <property type="evidence" value="ECO:0007669"/>
    <property type="project" value="UniProtKB-KW"/>
</dbReference>
<dbReference type="GO" id="GO:0005135">
    <property type="term" value="F:interleukin-3 receptor binding"/>
    <property type="evidence" value="ECO:0007669"/>
    <property type="project" value="InterPro"/>
</dbReference>
<dbReference type="GO" id="GO:0006955">
    <property type="term" value="P:immune response"/>
    <property type="evidence" value="ECO:0007669"/>
    <property type="project" value="InterPro"/>
</dbReference>
<dbReference type="Gene3D" id="1.20.1250.10">
    <property type="match status" value="1"/>
</dbReference>
<dbReference type="InterPro" id="IPR009079">
    <property type="entry name" value="4_helix_cytokine-like_core"/>
</dbReference>
<dbReference type="InterPro" id="IPR002183">
    <property type="entry name" value="IL-3"/>
</dbReference>
<dbReference type="PANTHER" id="PTHR48489">
    <property type="entry name" value="INTERLEUKIN-3"/>
    <property type="match status" value="1"/>
</dbReference>
<dbReference type="PANTHER" id="PTHR48489:SF1">
    <property type="entry name" value="INTERLEUKIN-3"/>
    <property type="match status" value="1"/>
</dbReference>
<dbReference type="Pfam" id="PF02059">
    <property type="entry name" value="IL3"/>
    <property type="match status" value="1"/>
</dbReference>
<dbReference type="PIRSF" id="PIRSF001939">
    <property type="entry name" value="IL-3"/>
    <property type="match status" value="1"/>
</dbReference>
<dbReference type="PRINTS" id="PR00430">
    <property type="entry name" value="INTERLEUKIN3"/>
</dbReference>
<dbReference type="SUPFAM" id="SSF47266">
    <property type="entry name" value="4-helical cytokines"/>
    <property type="match status" value="1"/>
</dbReference>
<gene>
    <name type="primary">IL3</name>
</gene>
<organism>
    <name type="scientific">Hylobates lar</name>
    <name type="common">Lar gibbon</name>
    <name type="synonym">White-handed gibbon</name>
    <dbReference type="NCBI Taxonomy" id="9580"/>
    <lineage>
        <taxon>Eukaryota</taxon>
        <taxon>Metazoa</taxon>
        <taxon>Chordata</taxon>
        <taxon>Craniata</taxon>
        <taxon>Vertebrata</taxon>
        <taxon>Euteleostomi</taxon>
        <taxon>Mammalia</taxon>
        <taxon>Eutheria</taxon>
        <taxon>Euarchontoglires</taxon>
        <taxon>Primates</taxon>
        <taxon>Haplorrhini</taxon>
        <taxon>Catarrhini</taxon>
        <taxon>Hylobatidae</taxon>
        <taxon>Hylobates</taxon>
    </lineage>
</organism>
<protein>
    <recommendedName>
        <fullName>Interleukin-3</fullName>
        <shortName>IL-3</shortName>
    </recommendedName>
    <alternativeName>
        <fullName>Hematopoietic growth factor</fullName>
    </alternativeName>
    <alternativeName>
        <fullName>Mast cell growth factor</fullName>
        <shortName>MCGF</shortName>
    </alternativeName>
    <alternativeName>
        <fullName>Multipotential colony-stimulating factor</fullName>
    </alternativeName>
    <alternativeName>
        <fullName>P-cell-stimulating factor</fullName>
    </alternativeName>
</protein>
<reference key="1">
    <citation type="journal article" date="1986" name="Cell">
        <title>Human IL-3 (multi-CSF): identification by expression cloning of a novel hematopoietic growth factor related to murine IL-3.</title>
        <authorList>
            <person name="Yang Y.-C."/>
            <person name="Ciarletta A.B."/>
            <person name="Temple P.A."/>
            <person name="Chung M.P."/>
            <person name="Kovacic S."/>
            <person name="Witek-Giannotti J.S."/>
            <person name="Leary A.C."/>
            <person name="Kriz R."/>
            <person name="Donahue R.E."/>
            <person name="Wong G.G."/>
            <person name="Clark S.C."/>
        </authorList>
    </citation>
    <scope>NUCLEOTIDE SEQUENCE [MRNA]</scope>
</reference>
<feature type="signal peptide" evidence="1">
    <location>
        <begin position="1"/>
        <end position="19"/>
    </location>
</feature>
<feature type="chain" id="PRO_0000015517" description="Interleukin-3">
    <location>
        <begin position="20"/>
        <end position="152"/>
    </location>
</feature>
<feature type="glycosylation site" description="N-linked (GlcNAc...) asparagine" evidence="2">
    <location>
        <position position="34"/>
    </location>
</feature>
<feature type="glycosylation site" description="N-linked (GlcNAc...) asparagine" evidence="2">
    <location>
        <position position="89"/>
    </location>
</feature>
<feature type="disulfide bond" evidence="1">
    <location>
        <begin position="35"/>
        <end position="103"/>
    </location>
</feature>
<keyword id="KW-0202">Cytokine</keyword>
<keyword id="KW-1015">Disulfide bond</keyword>
<keyword id="KW-0325">Glycoprotein</keyword>
<keyword id="KW-0339">Growth factor</keyword>
<keyword id="KW-0964">Secreted</keyword>
<keyword id="KW-0732">Signal</keyword>
<accession>P06740</accession>
<proteinExistence type="evidence at transcript level"/>
<sequence length="152" mass="17207">MSCLPVLLLLQLLVSPGLQAPMTQTTSLKTSWVNCSNMIDEIITHLKQPPLPLLDFNNLNGEDQDILMENNLRRPNLEAFNKAVKSLQNASAIESILKNLPPCLPMATAAPTRHPIRIKDGDWNEFRRKLKFYLKTLENEQAQQMTLSLEIS</sequence>
<evidence type="ECO:0000250" key="1"/>
<evidence type="ECO:0000255" key="2"/>
<evidence type="ECO:0000305" key="3"/>